<reference key="1">
    <citation type="journal article" date="2007" name="J. Bacteriol.">
        <title>Whole-genome analysis of the methyl tert-butyl ether-degrading beta-proteobacterium Methylibium petroleiphilum PM1.</title>
        <authorList>
            <person name="Kane S.R."/>
            <person name="Chakicherla A.Y."/>
            <person name="Chain P.S.G."/>
            <person name="Schmidt R."/>
            <person name="Shin M.W."/>
            <person name="Legler T.C."/>
            <person name="Scow K.M."/>
            <person name="Larimer F.W."/>
            <person name="Lucas S.M."/>
            <person name="Richardson P.M."/>
            <person name="Hristova K.R."/>
        </authorList>
    </citation>
    <scope>NUCLEOTIDE SEQUENCE [LARGE SCALE GENOMIC DNA]</scope>
    <source>
        <strain>ATCC BAA-1232 / LMG 22953 / PM1</strain>
    </source>
</reference>
<organism>
    <name type="scientific">Methylibium petroleiphilum (strain ATCC BAA-1232 / LMG 22953 / PM1)</name>
    <dbReference type="NCBI Taxonomy" id="420662"/>
    <lineage>
        <taxon>Bacteria</taxon>
        <taxon>Pseudomonadati</taxon>
        <taxon>Pseudomonadota</taxon>
        <taxon>Betaproteobacteria</taxon>
        <taxon>Burkholderiales</taxon>
        <taxon>Sphaerotilaceae</taxon>
        <taxon>Methylibium</taxon>
    </lineage>
</organism>
<dbReference type="EC" id="3.5.1.5" evidence="1"/>
<dbReference type="EMBL" id="CP000555">
    <property type="protein sequence ID" value="ABM93630.1"/>
    <property type="molecule type" value="Genomic_DNA"/>
</dbReference>
<dbReference type="RefSeq" id="WP_011828268.1">
    <property type="nucleotide sequence ID" value="NC_008825.1"/>
</dbReference>
<dbReference type="SMR" id="A2SDJ1"/>
<dbReference type="STRING" id="420662.Mpe_A0668"/>
<dbReference type="KEGG" id="mpt:Mpe_A0668"/>
<dbReference type="eggNOG" id="COG0832">
    <property type="taxonomic scope" value="Bacteria"/>
</dbReference>
<dbReference type="HOGENOM" id="CLU_129707_1_1_4"/>
<dbReference type="UniPathway" id="UPA00258">
    <property type="reaction ID" value="UER00370"/>
</dbReference>
<dbReference type="Proteomes" id="UP000000366">
    <property type="component" value="Chromosome"/>
</dbReference>
<dbReference type="GO" id="GO:0035550">
    <property type="term" value="C:urease complex"/>
    <property type="evidence" value="ECO:0007669"/>
    <property type="project" value="InterPro"/>
</dbReference>
<dbReference type="GO" id="GO:0009039">
    <property type="term" value="F:urease activity"/>
    <property type="evidence" value="ECO:0007669"/>
    <property type="project" value="UniProtKB-UniRule"/>
</dbReference>
<dbReference type="GO" id="GO:0043419">
    <property type="term" value="P:urea catabolic process"/>
    <property type="evidence" value="ECO:0007669"/>
    <property type="project" value="UniProtKB-UniRule"/>
</dbReference>
<dbReference type="CDD" id="cd00407">
    <property type="entry name" value="Urease_beta"/>
    <property type="match status" value="1"/>
</dbReference>
<dbReference type="Gene3D" id="2.10.150.10">
    <property type="entry name" value="Urease, beta subunit"/>
    <property type="match status" value="1"/>
</dbReference>
<dbReference type="HAMAP" id="MF_01954">
    <property type="entry name" value="Urease_beta"/>
    <property type="match status" value="1"/>
</dbReference>
<dbReference type="InterPro" id="IPR002019">
    <property type="entry name" value="Urease_beta-like"/>
</dbReference>
<dbReference type="InterPro" id="IPR036461">
    <property type="entry name" value="Urease_betasu_sf"/>
</dbReference>
<dbReference type="InterPro" id="IPR050069">
    <property type="entry name" value="Urease_subunit"/>
</dbReference>
<dbReference type="NCBIfam" id="NF009682">
    <property type="entry name" value="PRK13203.1"/>
    <property type="match status" value="1"/>
</dbReference>
<dbReference type="NCBIfam" id="TIGR00192">
    <property type="entry name" value="urease_beta"/>
    <property type="match status" value="1"/>
</dbReference>
<dbReference type="PANTHER" id="PTHR33569">
    <property type="entry name" value="UREASE"/>
    <property type="match status" value="1"/>
</dbReference>
<dbReference type="PANTHER" id="PTHR33569:SF1">
    <property type="entry name" value="UREASE"/>
    <property type="match status" value="1"/>
</dbReference>
<dbReference type="Pfam" id="PF00699">
    <property type="entry name" value="Urease_beta"/>
    <property type="match status" value="1"/>
</dbReference>
<dbReference type="SUPFAM" id="SSF51278">
    <property type="entry name" value="Urease, beta-subunit"/>
    <property type="match status" value="1"/>
</dbReference>
<comment type="catalytic activity">
    <reaction evidence="1">
        <text>urea + 2 H2O + H(+) = hydrogencarbonate + 2 NH4(+)</text>
        <dbReference type="Rhea" id="RHEA:20557"/>
        <dbReference type="ChEBI" id="CHEBI:15377"/>
        <dbReference type="ChEBI" id="CHEBI:15378"/>
        <dbReference type="ChEBI" id="CHEBI:16199"/>
        <dbReference type="ChEBI" id="CHEBI:17544"/>
        <dbReference type="ChEBI" id="CHEBI:28938"/>
        <dbReference type="EC" id="3.5.1.5"/>
    </reaction>
</comment>
<comment type="pathway">
    <text evidence="1">Nitrogen metabolism; urea degradation; CO(2) and NH(3) from urea (urease route): step 1/1.</text>
</comment>
<comment type="subunit">
    <text evidence="1">Heterotrimer of UreA (gamma), UreB (beta) and UreC (alpha) subunits. Three heterotrimers associate to form the active enzyme.</text>
</comment>
<comment type="subcellular location">
    <subcellularLocation>
        <location evidence="1">Cytoplasm</location>
    </subcellularLocation>
</comment>
<comment type="similarity">
    <text evidence="1">Belongs to the urease beta subunit family.</text>
</comment>
<name>URE2_METPP</name>
<evidence type="ECO:0000255" key="1">
    <source>
        <dbReference type="HAMAP-Rule" id="MF_01954"/>
    </source>
</evidence>
<keyword id="KW-0963">Cytoplasm</keyword>
<keyword id="KW-0378">Hydrolase</keyword>
<keyword id="KW-1185">Reference proteome</keyword>
<accession>A2SDJ1</accession>
<feature type="chain" id="PRO_1000070743" description="Urease subunit beta">
    <location>
        <begin position="1"/>
        <end position="102"/>
    </location>
</feature>
<proteinExistence type="inferred from homology"/>
<gene>
    <name evidence="1" type="primary">ureB</name>
    <name type="ordered locus">Mpe_A0668</name>
</gene>
<protein>
    <recommendedName>
        <fullName evidence="1">Urease subunit beta</fullName>
        <ecNumber evidence="1">3.5.1.5</ecNumber>
    </recommendedName>
    <alternativeName>
        <fullName evidence="1">Urea amidohydrolase subunit beta</fullName>
    </alternativeName>
</protein>
<sequence>MTPGELLPSDGPDHVLNPDRRTLTLVIENGGDRPIQVGSHYHFAETNGALRFDRAAAHGMRLNIASGTAVRFEPGQQRTVELVDYAGDRTVYGFRGLVQGKL</sequence>